<organism>
    <name type="scientific">Homo sapiens</name>
    <name type="common">Human</name>
    <dbReference type="NCBI Taxonomy" id="9606"/>
    <lineage>
        <taxon>Eukaryota</taxon>
        <taxon>Metazoa</taxon>
        <taxon>Chordata</taxon>
        <taxon>Craniata</taxon>
        <taxon>Vertebrata</taxon>
        <taxon>Euteleostomi</taxon>
        <taxon>Mammalia</taxon>
        <taxon>Eutheria</taxon>
        <taxon>Euarchontoglires</taxon>
        <taxon>Primates</taxon>
        <taxon>Haplorrhini</taxon>
        <taxon>Catarrhini</taxon>
        <taxon>Hominidae</taxon>
        <taxon>Homo</taxon>
    </lineage>
</organism>
<comment type="function">
    <text evidence="2 5 7 8 9 10 15">Non-catalytic component of the multisynthase complex. Stimulates the catalytic activity of cytoplasmic arginyl-tRNA synthase (PubMed:10358004). Binds tRNA. Possesses inflammatory cytokine activity (PubMed:11306575). Negatively regulates TGF-beta signaling through stabilization of SMURF2 by binding to SMURF2 and inhibiting its SMAD7-mediated degradation (By similarity). Involved in glucose homeostasis through induction of glucagon secretion at low glucose levels (By similarity). Promotes dermal fibroblast proliferation and wound repair (PubMed:16472771). Regulates KDELR1-mediated retention of HSP90B1/gp96 in the endoplasmic reticulum (By similarity). Plays a role in angiogenesis by inducing endothelial cell migration at low concentrations and endothelian cell apoptosis at high concentrations (PubMed:12237313). Induces maturation of dendritic cells and monocyte cell adhesion (PubMed:11818442). Modulates endothelial cell responses by degrading HIF-1A through interaction with PSMA7 (PubMed:19362550).</text>
</comment>
<comment type="subunit">
    <text evidence="2 5 8 12 13 14 15 17 18">Homodimer. Part of the multisynthetase complex (MSC), a multisubunit complex that groups tRNA ligases for Arg (RARS1), Asp (DARS1), Gln (QARS1), Ile (IARS1), Leu (LARS1), Lys (KARS1), Met (MARS1) the bifunctional ligase for Glu and Pro (EPRS1) and the auxiliary subunits AIMP1/p43, AIMP2/p38 and EEF1E1/p18 (PubMed:19131329, PubMed:19289464, PubMed:24312579). Interacts (via N-terminus) with RARS1 (via N-terminus) (PubMed:10358004, PubMed:17443684). Part of a complex composed of RARS1, QARS1 and AIMP1 (PubMed:25288775). Interacts (via C-terminus) with SMURF2. Interacts (via N-terminus) with HSP90B1/gp96 (via C-terminus) (By similarity). Interacts with PSMA7 (PubMed:19362550). Interacts with TARS3 (PubMed:24312579).</text>
</comment>
<comment type="interaction">
    <interactant intactId="EBI-1045802">
        <id>Q12904</id>
    </interactant>
    <interactant intactId="EBI-745226">
        <id>Q13155</id>
        <label>AIMP2</label>
    </interactant>
    <organismsDiffer>false</organismsDiffer>
    <experiments>5</experiments>
</comment>
<comment type="interaction">
    <interactant intactId="EBI-1045802">
        <id>Q12904</id>
    </interactant>
    <interactant intactId="EBI-21353855">
        <id>Q99598</id>
        <label>TSNAX</label>
    </interactant>
    <organismsDiffer>false</organismsDiffer>
    <experiments>3</experiments>
</comment>
<comment type="interaction">
    <interactant intactId="EBI-1045802">
        <id>Q12904</id>
    </interactant>
    <interactant intactId="EBI-6179719">
        <id>PRO_0000038593</id>
        <label>gag</label>
        <dbReference type="UniProtKB" id="P04591"/>
    </interactant>
    <organismsDiffer>true</organismsDiffer>
    <experiments>3</experiments>
</comment>
<comment type="interaction">
    <interactant intactId="EBI-12412735">
        <id>Q12904-2</id>
    </interactant>
    <interactant intactId="EBI-745226">
        <id>Q13155</id>
        <label>AIMP2</label>
    </interactant>
    <organismsDiffer>false</organismsDiffer>
    <experiments>5</experiments>
</comment>
<comment type="interaction">
    <interactant intactId="EBI-12412735">
        <id>Q12904-2</id>
    </interactant>
    <interactant intactId="EBI-746815">
        <id>Q86YM7</id>
        <label>HOMER1</label>
    </interactant>
    <organismsDiffer>false</organismsDiffer>
    <experiments>3</experiments>
</comment>
<comment type="interaction">
    <interactant intactId="EBI-12412735">
        <id>Q12904-2</id>
    </interactant>
    <interactant intactId="EBI-748974">
        <id>Q96CV9</id>
        <label>OPTN</label>
    </interactant>
    <organismsDiffer>false</organismsDiffer>
    <experiments>6</experiments>
</comment>
<comment type="interaction">
    <interactant intactId="EBI-12412735">
        <id>Q12904-2</id>
    </interactant>
    <interactant intactId="EBI-355482">
        <id>P54136</id>
        <label>RARS1</label>
    </interactant>
    <organismsDiffer>false</organismsDiffer>
    <experiments>3</experiments>
</comment>
<comment type="subcellular location">
    <subcellularLocation>
        <location evidence="11">Nucleus</location>
    </subcellularLocation>
    <subcellularLocation>
        <location evidence="14">Cytoplasm</location>
        <location evidence="14">Cytosol</location>
    </subcellularLocation>
    <subcellularLocation>
        <location evidence="6">Secreted</location>
    </subcellularLocation>
    <subcellularLocation>
        <location evidence="2">Endoplasmic reticulum</location>
    </subcellularLocation>
    <subcellularLocation>
        <location evidence="2">Golgi apparatus</location>
    </subcellularLocation>
    <text evidence="2 6">Enriched in secretory vesicles of pancreatic alpha cells and secreted from the pancreas in response to low glucose levels (By similarity). Secreted in response to hypoxia (PubMed:10850427). Also secreted in response to both apoptotic and necrotic cell death.</text>
</comment>
<comment type="alternative products">
    <event type="alternative splicing"/>
    <isoform>
        <id>Q12904-1</id>
        <name>1</name>
        <sequence type="displayed"/>
    </isoform>
    <isoform>
        <id>Q12904-2</id>
        <name>2</name>
        <sequence type="described" ref="VSP_042197"/>
    </isoform>
</comment>
<comment type="PTM">
    <text evidence="6 8">Cleaved by caspase-7 in response to apoptosis to produce EMAP-II.</text>
</comment>
<comment type="disease" evidence="16">
    <disease id="DI-03001">
        <name>Leukodystrophy, hypomyelinating, 3</name>
        <acronym>HLD3</acronym>
        <description>A severe autosomal recessive hypomyelinating leukodystrophy characterized by early infantile onset of global developmental delay, lack of development, lack of speech acquisition, and peripheral spasticity associated with decreased myelination in the central nervous system.</description>
        <dbReference type="MIM" id="260600"/>
    </disease>
    <text>The disease is caused by variants affecting the gene represented in this entry.</text>
</comment>
<accession>Q12904</accession>
<accession>B3KTR2</accession>
<accession>B4E1S7</accession>
<accession>Q6FG28</accession>
<accession>Q96CQ9</accession>
<feature type="initiator methionine" description="Removed" evidence="17 19 25 26">
    <location>
        <position position="1"/>
    </location>
</feature>
<feature type="chain" id="PRO_0000223394" description="Aminoacyl tRNA synthase complex-interacting multifunctional protein 1">
    <location>
        <begin position="2"/>
        <end position="312"/>
    </location>
</feature>
<feature type="chain" id="PRO_0000019242" description="Endothelial monocyte-activating polypeptide 2">
    <location>
        <begin position="147"/>
        <end position="312"/>
    </location>
</feature>
<feature type="domain" description="tRNA-binding" evidence="3">
    <location>
        <begin position="151"/>
        <end position="252"/>
    </location>
</feature>
<feature type="region of interest" description="Required for fibroblast proliferation">
    <location>
        <begin position="6"/>
        <end position="46"/>
    </location>
</feature>
<feature type="region of interest" description="Interaction with HSP90B1" evidence="1">
    <location>
        <begin position="54"/>
        <end position="194"/>
    </location>
</feature>
<feature type="region of interest" description="Required for endothelial cell death">
    <location>
        <begin position="101"/>
        <end position="114"/>
    </location>
</feature>
<feature type="region of interest" description="Disordered" evidence="4">
    <location>
        <begin position="107"/>
        <end position="147"/>
    </location>
</feature>
<feature type="region of interest" description="Required for endothelial cell migration">
    <location>
        <begin position="114"/>
        <end position="192"/>
    </location>
</feature>
<feature type="compositionally biased region" description="Basic and acidic residues" evidence="4">
    <location>
        <begin position="111"/>
        <end position="138"/>
    </location>
</feature>
<feature type="modified residue" description="N-acetylalanine" evidence="17 19 25 26">
    <location>
        <position position="2"/>
    </location>
</feature>
<feature type="modified residue" description="Phosphoserine" evidence="27">
    <location>
        <position position="140"/>
    </location>
</feature>
<feature type="modified residue" description="N6-succinyllysine" evidence="2">
    <location>
        <position position="269"/>
    </location>
</feature>
<feature type="cross-link" description="Glycyl lysine isopeptide (Lys-Gly) (interchain with G-Cter in SUMO1)" evidence="28">
    <location>
        <position position="137"/>
    </location>
</feature>
<feature type="splice variant" id="VSP_042197" description="In isoform 2." evidence="21 23">
    <original>M</original>
    <variation>MLPAVAVSEPVVLRFMIFCRLLAKM</variation>
    <location>
        <position position="1"/>
    </location>
</feature>
<feature type="sequence variant" id="VAR_025212" description="In dbSNP:rs1134648." evidence="20">
    <original>P</original>
    <variation>A</variation>
    <location>
        <position position="79"/>
    </location>
</feature>
<feature type="sequence variant" id="VAR_029156" description="In dbSNP:rs113844295.">
    <original>T</original>
    <variation>A</variation>
    <location>
        <position position="104"/>
    </location>
</feature>
<feature type="sequence variant" id="VAR_050124" description="In dbSNP:rs2230255.">
    <original>T</original>
    <variation>A</variation>
    <location>
        <position position="117"/>
    </location>
</feature>
<feature type="sequence conflict" description="In Ref. 3; BAG64889." evidence="22" ref="3">
    <original>Q</original>
    <variation>R</variation>
    <location>
        <position position="138"/>
    </location>
</feature>
<feature type="helix" evidence="32">
    <location>
        <begin position="6"/>
        <end position="72"/>
    </location>
</feature>
<feature type="helix" evidence="31">
    <location>
        <begin position="152"/>
        <end position="154"/>
    </location>
</feature>
<feature type="strand" evidence="31">
    <location>
        <begin position="157"/>
        <end position="168"/>
    </location>
</feature>
<feature type="strand" evidence="31">
    <location>
        <begin position="171"/>
        <end position="180"/>
    </location>
</feature>
<feature type="strand" evidence="31">
    <location>
        <begin position="182"/>
        <end position="185"/>
    </location>
</feature>
<feature type="strand" evidence="31">
    <location>
        <begin position="187"/>
        <end position="191"/>
    </location>
</feature>
<feature type="turn" evidence="31">
    <location>
        <begin position="194"/>
        <end position="196"/>
    </location>
</feature>
<feature type="helix" evidence="31">
    <location>
        <begin position="199"/>
        <end position="202"/>
    </location>
</feature>
<feature type="strand" evidence="31">
    <location>
        <begin position="205"/>
        <end position="210"/>
    </location>
</feature>
<feature type="strand" evidence="31">
    <location>
        <begin position="216"/>
        <end position="220"/>
    </location>
</feature>
<feature type="strand" evidence="30">
    <location>
        <begin position="221"/>
        <end position="223"/>
    </location>
</feature>
<feature type="strand" evidence="31">
    <location>
        <begin position="229"/>
        <end position="232"/>
    </location>
</feature>
<feature type="strand" evidence="31">
    <location>
        <begin position="235"/>
        <end position="238"/>
    </location>
</feature>
<feature type="strand" evidence="30">
    <location>
        <begin position="262"/>
        <end position="264"/>
    </location>
</feature>
<feature type="turn" evidence="31">
    <location>
        <begin position="266"/>
        <end position="268"/>
    </location>
</feature>
<feature type="helix" evidence="31">
    <location>
        <begin position="271"/>
        <end position="274"/>
    </location>
</feature>
<feature type="helix" evidence="31">
    <location>
        <begin position="275"/>
        <end position="277"/>
    </location>
</feature>
<feature type="strand" evidence="31">
    <location>
        <begin position="278"/>
        <end position="280"/>
    </location>
</feature>
<feature type="strand" evidence="31">
    <location>
        <begin position="284"/>
        <end position="288"/>
    </location>
</feature>
<feature type="turn" evidence="31">
    <location>
        <begin position="296"/>
        <end position="298"/>
    </location>
</feature>
<feature type="strand" evidence="29">
    <location>
        <begin position="310"/>
        <end position="312"/>
    </location>
</feature>
<feature type="modified residue" description="N-acetylmethionine" evidence="19">
    <location sequence="Q12904-2">
        <position position="1"/>
    </location>
</feature>
<gene>
    <name type="primary">AIMP1</name>
    <name type="synonym">EMAP2</name>
    <name type="synonym">SCYE1</name>
</gene>
<keyword id="KW-0002">3D-structure</keyword>
<keyword id="KW-0007">Acetylation</keyword>
<keyword id="KW-0025">Alternative splicing</keyword>
<keyword id="KW-0037">Angiogenesis</keyword>
<keyword id="KW-0053">Apoptosis</keyword>
<keyword id="KW-0202">Cytokine</keyword>
<keyword id="KW-0963">Cytoplasm</keyword>
<keyword id="KW-0903">Direct protein sequencing</keyword>
<keyword id="KW-0256">Endoplasmic reticulum</keyword>
<keyword id="KW-0333">Golgi apparatus</keyword>
<keyword id="KW-0395">Inflammatory response</keyword>
<keyword id="KW-1017">Isopeptide bond</keyword>
<keyword id="KW-1026">Leukodystrophy</keyword>
<keyword id="KW-0539">Nucleus</keyword>
<keyword id="KW-0597">Phosphoprotein</keyword>
<keyword id="KW-0648">Protein biosynthesis</keyword>
<keyword id="KW-1267">Proteomics identification</keyword>
<keyword id="KW-1185">Reference proteome</keyword>
<keyword id="KW-0694">RNA-binding</keyword>
<keyword id="KW-0964">Secreted</keyword>
<keyword id="KW-0820">tRNA-binding</keyword>
<keyword id="KW-0832">Ubl conjugation</keyword>
<dbReference type="EMBL" id="U10117">
    <property type="protein sequence ID" value="AAA62202.1"/>
    <property type="molecule type" value="mRNA"/>
</dbReference>
<dbReference type="EMBL" id="CR542281">
    <property type="protein sequence ID" value="CAG47076.1"/>
    <property type="molecule type" value="mRNA"/>
</dbReference>
<dbReference type="EMBL" id="AK095951">
    <property type="protein sequence ID" value="BAG53174.1"/>
    <property type="molecule type" value="mRNA"/>
</dbReference>
<dbReference type="EMBL" id="AK303965">
    <property type="protein sequence ID" value="BAG64889.1"/>
    <property type="molecule type" value="mRNA"/>
</dbReference>
<dbReference type="EMBL" id="BC014051">
    <property type="protein sequence ID" value="AAH14051.1"/>
    <property type="molecule type" value="mRNA"/>
</dbReference>
<dbReference type="CCDS" id="CCDS3674.1">
    <molecule id="Q12904-1"/>
</dbReference>
<dbReference type="PIR" id="B55053">
    <property type="entry name" value="B55053"/>
</dbReference>
<dbReference type="RefSeq" id="NP_001135887.1">
    <molecule id="Q12904-1"/>
    <property type="nucleotide sequence ID" value="NM_001142415.2"/>
</dbReference>
<dbReference type="RefSeq" id="NP_001135888.2">
    <molecule id="Q12904-1"/>
    <property type="nucleotide sequence ID" value="NM_001142416.2"/>
</dbReference>
<dbReference type="RefSeq" id="NP_004748.2">
    <molecule id="Q12904-1"/>
    <property type="nucleotide sequence ID" value="NM_004757.3"/>
</dbReference>
<dbReference type="RefSeq" id="XP_016864324.1">
    <molecule id="Q12904-1"/>
    <property type="nucleotide sequence ID" value="XM_017008835.3"/>
</dbReference>
<dbReference type="RefSeq" id="XP_016864325.1">
    <property type="nucleotide sequence ID" value="XM_017008836.1"/>
</dbReference>
<dbReference type="RefSeq" id="XP_047272366.1">
    <molecule id="Q12904-1"/>
    <property type="nucleotide sequence ID" value="XM_047416410.1"/>
</dbReference>
<dbReference type="RefSeq" id="XP_054207221.1">
    <molecule id="Q12904-1"/>
    <property type="nucleotide sequence ID" value="XM_054351246.1"/>
</dbReference>
<dbReference type="PDB" id="1E7Z">
    <property type="method" value="X-ray"/>
    <property type="resolution" value="2.05 A"/>
    <property type="chains" value="A=148-312"/>
</dbReference>
<dbReference type="PDB" id="1EUJ">
    <property type="method" value="X-ray"/>
    <property type="resolution" value="1.80 A"/>
    <property type="chains" value="A/B=147-312"/>
</dbReference>
<dbReference type="PDB" id="1FL0">
    <property type="method" value="X-ray"/>
    <property type="resolution" value="1.50 A"/>
    <property type="chains" value="A=150-312"/>
</dbReference>
<dbReference type="PDB" id="4R3Z">
    <property type="method" value="X-ray"/>
    <property type="resolution" value="4.03 A"/>
    <property type="chains" value="A=1-312"/>
</dbReference>
<dbReference type="PDB" id="8J9S">
    <property type="method" value="X-ray"/>
    <property type="resolution" value="3.01 A"/>
    <property type="chains" value="A/B=1-79"/>
</dbReference>
<dbReference type="PDB" id="8ONG">
    <property type="method" value="Other"/>
    <property type="chains" value="A=146-312"/>
</dbReference>
<dbReference type="PDBsum" id="1E7Z"/>
<dbReference type="PDBsum" id="1EUJ"/>
<dbReference type="PDBsum" id="1FL0"/>
<dbReference type="PDBsum" id="4R3Z"/>
<dbReference type="PDBsum" id="8J9S"/>
<dbReference type="PDBsum" id="8ONG"/>
<dbReference type="BMRB" id="Q12904"/>
<dbReference type="SMR" id="Q12904"/>
<dbReference type="BioGRID" id="114679">
    <property type="interactions" value="267"/>
</dbReference>
<dbReference type="ComplexPortal" id="CPX-2469">
    <property type="entry name" value="Multiaminoacyl-tRNA synthetase complex"/>
</dbReference>
<dbReference type="CORUM" id="Q12904"/>
<dbReference type="FunCoup" id="Q12904">
    <property type="interactions" value="1600"/>
</dbReference>
<dbReference type="IntAct" id="Q12904">
    <property type="interactions" value="71"/>
</dbReference>
<dbReference type="MINT" id="Q12904"/>
<dbReference type="STRING" id="9606.ENSP00000378191"/>
<dbReference type="ChEMBL" id="CHEMBL4295810"/>
<dbReference type="MoonProt" id="Q12904"/>
<dbReference type="GlyGen" id="Q12904">
    <property type="glycosylation" value="1 site, 1 O-linked glycan (1 site)"/>
</dbReference>
<dbReference type="iPTMnet" id="Q12904"/>
<dbReference type="PhosphoSitePlus" id="Q12904"/>
<dbReference type="SwissPalm" id="Q12904"/>
<dbReference type="BioMuta" id="AIMP1"/>
<dbReference type="DMDM" id="85700432"/>
<dbReference type="jPOST" id="Q12904"/>
<dbReference type="MassIVE" id="Q12904"/>
<dbReference type="PaxDb" id="9606-ENSP00000378191"/>
<dbReference type="PeptideAtlas" id="Q12904"/>
<dbReference type="ProteomicsDB" id="59011">
    <molecule id="Q12904-1"/>
</dbReference>
<dbReference type="ProteomicsDB" id="59012">
    <molecule id="Q12904-2"/>
</dbReference>
<dbReference type="Pumba" id="Q12904"/>
<dbReference type="ABCD" id="Q12904">
    <property type="antibodies" value="1 sequenced antibody"/>
</dbReference>
<dbReference type="Antibodypedia" id="4317">
    <property type="antibodies" value="615 antibodies from 45 providers"/>
</dbReference>
<dbReference type="DNASU" id="9255"/>
<dbReference type="Ensembl" id="ENST00000358008.7">
    <molecule id="Q12904-1"/>
    <property type="protein sequence ID" value="ENSP00000350699.3"/>
    <property type="gene ID" value="ENSG00000164022.18"/>
</dbReference>
<dbReference type="Ensembl" id="ENST00000671868.1">
    <molecule id="Q12904-1"/>
    <property type="protein sequence ID" value="ENSP00000499850.1"/>
    <property type="gene ID" value="ENSG00000164022.18"/>
</dbReference>
<dbReference type="Ensembl" id="ENST00000671960.1">
    <molecule id="Q12904-1"/>
    <property type="protein sequence ID" value="ENSP00000500025.1"/>
    <property type="gene ID" value="ENSG00000164022.18"/>
</dbReference>
<dbReference type="Ensembl" id="ENST00000672285.1">
    <molecule id="Q12904-1"/>
    <property type="protein sequence ID" value="ENSP00000500668.1"/>
    <property type="gene ID" value="ENSG00000164022.18"/>
</dbReference>
<dbReference type="Ensembl" id="ENST00000672328.1">
    <molecule id="Q12904-1"/>
    <property type="protein sequence ID" value="ENSP00000500159.1"/>
    <property type="gene ID" value="ENSG00000164022.18"/>
</dbReference>
<dbReference type="Ensembl" id="ENST00000672337.1">
    <molecule id="Q12904-1"/>
    <property type="protein sequence ID" value="ENSP00000499921.1"/>
    <property type="gene ID" value="ENSG00000164022.18"/>
</dbReference>
<dbReference type="Ensembl" id="ENST00000672341.1">
    <molecule id="Q12904-1"/>
    <property type="protein sequence ID" value="ENSP00000500620.1"/>
    <property type="gene ID" value="ENSG00000164022.18"/>
</dbReference>
<dbReference type="Ensembl" id="ENST00000672911.1">
    <molecule id="Q12904-1"/>
    <property type="protein sequence ID" value="ENSP00000500170.1"/>
    <property type="gene ID" value="ENSG00000164022.18"/>
</dbReference>
<dbReference type="Ensembl" id="ENST00000673018.1">
    <molecule id="Q12904-1"/>
    <property type="protein sequence ID" value="ENSP00000500732.1"/>
    <property type="gene ID" value="ENSG00000164022.18"/>
</dbReference>
<dbReference type="Ensembl" id="ENST00000673123.1">
    <molecule id="Q12904-1"/>
    <property type="protein sequence ID" value="ENSP00000500794.1"/>
    <property type="gene ID" value="ENSG00000164022.18"/>
</dbReference>
<dbReference type="GeneID" id="9255"/>
<dbReference type="KEGG" id="hsa:9255"/>
<dbReference type="MANE-Select" id="ENST00000672341.1">
    <property type="protein sequence ID" value="ENSP00000500620.1"/>
    <property type="RefSeq nucleotide sequence ID" value="NM_001142416.2"/>
    <property type="RefSeq protein sequence ID" value="NP_001135888.2"/>
</dbReference>
<dbReference type="UCSC" id="uc003hyg.4">
    <molecule id="Q12904-1"/>
    <property type="organism name" value="human"/>
</dbReference>
<dbReference type="AGR" id="HGNC:10648"/>
<dbReference type="CTD" id="9255"/>
<dbReference type="DisGeNET" id="9255"/>
<dbReference type="GeneCards" id="AIMP1"/>
<dbReference type="HGNC" id="HGNC:10648">
    <property type="gene designation" value="AIMP1"/>
</dbReference>
<dbReference type="HPA" id="ENSG00000164022">
    <property type="expression patterns" value="Low tissue specificity"/>
</dbReference>
<dbReference type="MalaCards" id="AIMP1"/>
<dbReference type="MIM" id="260600">
    <property type="type" value="phenotype"/>
</dbReference>
<dbReference type="MIM" id="603605">
    <property type="type" value="gene"/>
</dbReference>
<dbReference type="neXtProt" id="NX_Q12904"/>
<dbReference type="OpenTargets" id="ENSG00000164022"/>
<dbReference type="Orphanet" id="88616">
    <property type="disease" value="Autosomal recessive non-syndromic intellectual disability"/>
</dbReference>
<dbReference type="Orphanet" id="280293">
    <property type="disease" value="Pelizaeus-Merzbacher-like disease due to AIMP1 mutation"/>
</dbReference>
<dbReference type="PharmGKB" id="PA35578"/>
<dbReference type="VEuPathDB" id="HostDB:ENSG00000164022"/>
<dbReference type="eggNOG" id="KOG2241">
    <property type="taxonomic scope" value="Eukaryota"/>
</dbReference>
<dbReference type="GeneTree" id="ENSGT00940000154950"/>
<dbReference type="HOGENOM" id="CLU_009710_6_1_1"/>
<dbReference type="InParanoid" id="Q12904"/>
<dbReference type="OMA" id="QPDLCTN"/>
<dbReference type="OrthoDB" id="197206at2759"/>
<dbReference type="PAN-GO" id="Q12904">
    <property type="GO annotations" value="0 GO annotations based on evolutionary models"/>
</dbReference>
<dbReference type="PhylomeDB" id="Q12904"/>
<dbReference type="TreeFam" id="TF324775"/>
<dbReference type="PathwayCommons" id="Q12904"/>
<dbReference type="Reactome" id="R-HSA-2408522">
    <property type="pathway name" value="Selenoamino acid metabolism"/>
</dbReference>
<dbReference type="Reactome" id="R-HSA-379716">
    <property type="pathway name" value="Cytosolic tRNA aminoacylation"/>
</dbReference>
<dbReference type="Reactome" id="R-HSA-9856649">
    <property type="pathway name" value="Transcriptional and post-translational regulation of MITF-M expression and activity"/>
</dbReference>
<dbReference type="SignaLink" id="Q12904"/>
<dbReference type="SIGNOR" id="Q12904"/>
<dbReference type="BioGRID-ORCS" id="9255">
    <property type="hits" value="14 hits in 1163 CRISPR screens"/>
</dbReference>
<dbReference type="ChiTaRS" id="AIMP1">
    <property type="organism name" value="human"/>
</dbReference>
<dbReference type="EvolutionaryTrace" id="Q12904"/>
<dbReference type="GeneWiki" id="SCYE1"/>
<dbReference type="GenomeRNAi" id="9255"/>
<dbReference type="Pharos" id="Q12904">
    <property type="development level" value="Tbio"/>
</dbReference>
<dbReference type="PRO" id="PR:Q12904"/>
<dbReference type="Proteomes" id="UP000005640">
    <property type="component" value="Chromosome 4"/>
</dbReference>
<dbReference type="RNAct" id="Q12904">
    <property type="molecule type" value="protein"/>
</dbReference>
<dbReference type="Bgee" id="ENSG00000164022">
    <property type="expression patterns" value="Expressed in calcaneal tendon and 215 other cell types or tissues"/>
</dbReference>
<dbReference type="ExpressionAtlas" id="Q12904">
    <property type="expression patterns" value="baseline and differential"/>
</dbReference>
<dbReference type="GO" id="GO:0017101">
    <property type="term" value="C:aminoacyl-tRNA synthetase multienzyme complex"/>
    <property type="evidence" value="ECO:0000314"/>
    <property type="project" value="UniProtKB"/>
</dbReference>
<dbReference type="GO" id="GO:0009986">
    <property type="term" value="C:cell surface"/>
    <property type="evidence" value="ECO:0000314"/>
    <property type="project" value="BHF-UCL"/>
</dbReference>
<dbReference type="GO" id="GO:0005829">
    <property type="term" value="C:cytosol"/>
    <property type="evidence" value="ECO:0000314"/>
    <property type="project" value="HPA"/>
</dbReference>
<dbReference type="GO" id="GO:0005783">
    <property type="term" value="C:endoplasmic reticulum"/>
    <property type="evidence" value="ECO:0007669"/>
    <property type="project" value="UniProtKB-SubCell"/>
</dbReference>
<dbReference type="GO" id="GO:0005615">
    <property type="term" value="C:extracellular space"/>
    <property type="evidence" value="ECO:0000250"/>
    <property type="project" value="UniProtKB"/>
</dbReference>
<dbReference type="GO" id="GO:0005794">
    <property type="term" value="C:Golgi apparatus"/>
    <property type="evidence" value="ECO:0007669"/>
    <property type="project" value="UniProtKB-SubCell"/>
</dbReference>
<dbReference type="GO" id="GO:0016020">
    <property type="term" value="C:membrane"/>
    <property type="evidence" value="ECO:0007005"/>
    <property type="project" value="UniProtKB"/>
</dbReference>
<dbReference type="GO" id="GO:0005634">
    <property type="term" value="C:nucleus"/>
    <property type="evidence" value="ECO:0007669"/>
    <property type="project" value="UniProtKB-SubCell"/>
</dbReference>
<dbReference type="GO" id="GO:0005125">
    <property type="term" value="F:cytokine activity"/>
    <property type="evidence" value="ECO:0000250"/>
    <property type="project" value="HGNC-UCL"/>
</dbReference>
<dbReference type="GO" id="GO:0051020">
    <property type="term" value="F:GTPase binding"/>
    <property type="evidence" value="ECO:0000353"/>
    <property type="project" value="UniProtKB"/>
</dbReference>
<dbReference type="GO" id="GO:0042803">
    <property type="term" value="F:protein homodimerization activity"/>
    <property type="evidence" value="ECO:0000314"/>
    <property type="project" value="HGNC-UCL"/>
</dbReference>
<dbReference type="GO" id="GO:0000049">
    <property type="term" value="F:tRNA binding"/>
    <property type="evidence" value="ECO:0000314"/>
    <property type="project" value="HGNC-UCL"/>
</dbReference>
<dbReference type="GO" id="GO:0001525">
    <property type="term" value="P:angiogenesis"/>
    <property type="evidence" value="ECO:0007669"/>
    <property type="project" value="UniProtKB-KW"/>
</dbReference>
<dbReference type="GO" id="GO:0006915">
    <property type="term" value="P:apoptotic process"/>
    <property type="evidence" value="ECO:0007669"/>
    <property type="project" value="UniProtKB-KW"/>
</dbReference>
<dbReference type="GO" id="GO:0007267">
    <property type="term" value="P:cell-cell signaling"/>
    <property type="evidence" value="ECO:0000314"/>
    <property type="project" value="HGNC-UCL"/>
</dbReference>
<dbReference type="GO" id="GO:0051607">
    <property type="term" value="P:defense response to virus"/>
    <property type="evidence" value="ECO:0007669"/>
    <property type="project" value="Ensembl"/>
</dbReference>
<dbReference type="GO" id="GO:0006954">
    <property type="term" value="P:inflammatory response"/>
    <property type="evidence" value="ECO:0007669"/>
    <property type="project" value="UniProtKB-KW"/>
</dbReference>
<dbReference type="GO" id="GO:0050900">
    <property type="term" value="P:leukocyte migration"/>
    <property type="evidence" value="ECO:0000314"/>
    <property type="project" value="HGNC-UCL"/>
</dbReference>
<dbReference type="GO" id="GO:0001937">
    <property type="term" value="P:negative regulation of endothelial cell proliferation"/>
    <property type="evidence" value="ECO:0000314"/>
    <property type="project" value="HGNC-UCL"/>
</dbReference>
<dbReference type="GO" id="GO:0070094">
    <property type="term" value="P:positive regulation of glucagon secretion"/>
    <property type="evidence" value="ECO:0000250"/>
    <property type="project" value="UniProtKB"/>
</dbReference>
<dbReference type="GO" id="GO:0006412">
    <property type="term" value="P:translation"/>
    <property type="evidence" value="ECO:0007669"/>
    <property type="project" value="UniProtKB-KW"/>
</dbReference>
<dbReference type="CDD" id="cd02799">
    <property type="entry name" value="tRNA_bind_EMAP-II_like"/>
    <property type="match status" value="1"/>
</dbReference>
<dbReference type="FunFam" id="2.40.50.140:FF:000047">
    <property type="entry name" value="tyrosine--tRNA ligase, cytoplasmic isoform X2"/>
    <property type="match status" value="1"/>
</dbReference>
<dbReference type="Gene3D" id="2.40.50.140">
    <property type="entry name" value="Nucleic acid-binding proteins"/>
    <property type="match status" value="1"/>
</dbReference>
<dbReference type="InterPro" id="IPR012340">
    <property type="entry name" value="NA-bd_OB-fold"/>
</dbReference>
<dbReference type="InterPro" id="IPR002547">
    <property type="entry name" value="tRNA-bd_dom"/>
</dbReference>
<dbReference type="InterPro" id="IPR051270">
    <property type="entry name" value="Tyrosine-tRNA_ligase_regulator"/>
</dbReference>
<dbReference type="PANTHER" id="PTHR11586:SF33">
    <property type="entry name" value="AMINOACYL TRNA SYNTHASE COMPLEX-INTERACTING MULTIFUNCTIONAL PROTEIN 1"/>
    <property type="match status" value="1"/>
</dbReference>
<dbReference type="PANTHER" id="PTHR11586">
    <property type="entry name" value="TRNA-AMINOACYLATION COFACTOR ARC1 FAMILY MEMBER"/>
    <property type="match status" value="1"/>
</dbReference>
<dbReference type="Pfam" id="PF01588">
    <property type="entry name" value="tRNA_bind"/>
    <property type="match status" value="1"/>
</dbReference>
<dbReference type="SUPFAM" id="SSF50249">
    <property type="entry name" value="Nucleic acid-binding proteins"/>
    <property type="match status" value="1"/>
</dbReference>
<dbReference type="PROSITE" id="PS50886">
    <property type="entry name" value="TRBD"/>
    <property type="match status" value="1"/>
</dbReference>
<evidence type="ECO:0000250" key="1"/>
<evidence type="ECO:0000250" key="2">
    <source>
        <dbReference type="UniProtKB" id="P31230"/>
    </source>
</evidence>
<evidence type="ECO:0000255" key="3">
    <source>
        <dbReference type="PROSITE-ProRule" id="PRU00209"/>
    </source>
</evidence>
<evidence type="ECO:0000256" key="4">
    <source>
        <dbReference type="SAM" id="MobiDB-lite"/>
    </source>
</evidence>
<evidence type="ECO:0000269" key="5">
    <source>
    </source>
</evidence>
<evidence type="ECO:0000269" key="6">
    <source>
    </source>
</evidence>
<evidence type="ECO:0000269" key="7">
    <source>
    </source>
</evidence>
<evidence type="ECO:0000269" key="8">
    <source>
    </source>
</evidence>
<evidence type="ECO:0000269" key="9">
    <source>
    </source>
</evidence>
<evidence type="ECO:0000269" key="10">
    <source>
    </source>
</evidence>
<evidence type="ECO:0000269" key="11">
    <source>
    </source>
</evidence>
<evidence type="ECO:0000269" key="12">
    <source>
    </source>
</evidence>
<evidence type="ECO:0000269" key="13">
    <source>
    </source>
</evidence>
<evidence type="ECO:0000269" key="14">
    <source>
    </source>
</evidence>
<evidence type="ECO:0000269" key="15">
    <source>
    </source>
</evidence>
<evidence type="ECO:0000269" key="16">
    <source>
    </source>
</evidence>
<evidence type="ECO:0000269" key="17">
    <source>
    </source>
</evidence>
<evidence type="ECO:0000269" key="18">
    <source>
    </source>
</evidence>
<evidence type="ECO:0000269" key="19">
    <source>
    </source>
</evidence>
<evidence type="ECO:0000269" key="20">
    <source>
    </source>
</evidence>
<evidence type="ECO:0000303" key="21">
    <source>
    </source>
</evidence>
<evidence type="ECO:0000305" key="22"/>
<evidence type="ECO:0000305" key="23">
    <source>
    </source>
</evidence>
<evidence type="ECO:0007744" key="24">
    <source>
        <dbReference type="PDB" id="4R3Z"/>
    </source>
</evidence>
<evidence type="ECO:0007744" key="25">
    <source>
    </source>
</evidence>
<evidence type="ECO:0007744" key="26">
    <source>
    </source>
</evidence>
<evidence type="ECO:0007744" key="27">
    <source>
    </source>
</evidence>
<evidence type="ECO:0007744" key="28">
    <source>
    </source>
</evidence>
<evidence type="ECO:0007829" key="29">
    <source>
        <dbReference type="PDB" id="1E7Z"/>
    </source>
</evidence>
<evidence type="ECO:0007829" key="30">
    <source>
        <dbReference type="PDB" id="1EUJ"/>
    </source>
</evidence>
<evidence type="ECO:0007829" key="31">
    <source>
        <dbReference type="PDB" id="1FL0"/>
    </source>
</evidence>
<evidence type="ECO:0007829" key="32">
    <source>
        <dbReference type="PDB" id="8J9S"/>
    </source>
</evidence>
<reference key="1">
    <citation type="journal article" date="1994" name="J. Biol. Chem.">
        <title>Characterization of a novel tumor-derived cytokine. Endothelial-monocyte activating polypeptide II.</title>
        <authorList>
            <person name="Kao J."/>
            <person name="Houck K."/>
            <person name="Fan Y."/>
            <person name="Haehnel I."/>
            <person name="Libutti S.K."/>
            <person name="Kayton M.L."/>
            <person name="Grikscheit T."/>
            <person name="Chabot J."/>
            <person name="Nowygrod R."/>
            <person name="Greenberg S."/>
            <person name="Kuang W.J."/>
            <person name="Leung D.W."/>
            <person name="Hayward J.R."/>
            <person name="Kisiel W."/>
            <person name="Heath M."/>
            <person name="Brett J."/>
            <person name="Stern D.M."/>
        </authorList>
    </citation>
    <scope>NUCLEOTIDE SEQUENCE [MRNA] (ISOFORM 1)</scope>
    <scope>VARIANT ALA-79</scope>
</reference>
<reference key="2">
    <citation type="submission" date="2004-06" db="EMBL/GenBank/DDBJ databases">
        <title>Cloning of human full open reading frames in Gateway(TM) system entry vector (pDONR201).</title>
        <authorList>
            <person name="Halleck A."/>
            <person name="Ebert L."/>
            <person name="Mkoundinya M."/>
            <person name="Schick M."/>
            <person name="Eisenstein S."/>
            <person name="Neubert P."/>
            <person name="Kstrang K."/>
            <person name="Schatten R."/>
            <person name="Shen B."/>
            <person name="Henze S."/>
            <person name="Mar W."/>
            <person name="Korn B."/>
            <person name="Zuo D."/>
            <person name="Hu Y."/>
            <person name="LaBaer J."/>
        </authorList>
    </citation>
    <scope>NUCLEOTIDE SEQUENCE [LARGE SCALE MRNA] (ISOFORM 1)</scope>
</reference>
<reference key="3">
    <citation type="journal article" date="2004" name="Nat. Genet.">
        <title>Complete sequencing and characterization of 21,243 full-length human cDNAs.</title>
        <authorList>
            <person name="Ota T."/>
            <person name="Suzuki Y."/>
            <person name="Nishikawa T."/>
            <person name="Otsuki T."/>
            <person name="Sugiyama T."/>
            <person name="Irie R."/>
            <person name="Wakamatsu A."/>
            <person name="Hayashi K."/>
            <person name="Sato H."/>
            <person name="Nagai K."/>
            <person name="Kimura K."/>
            <person name="Makita H."/>
            <person name="Sekine M."/>
            <person name="Obayashi M."/>
            <person name="Nishi T."/>
            <person name="Shibahara T."/>
            <person name="Tanaka T."/>
            <person name="Ishii S."/>
            <person name="Yamamoto J."/>
            <person name="Saito K."/>
            <person name="Kawai Y."/>
            <person name="Isono Y."/>
            <person name="Nakamura Y."/>
            <person name="Nagahari K."/>
            <person name="Murakami K."/>
            <person name="Yasuda T."/>
            <person name="Iwayanagi T."/>
            <person name="Wagatsuma M."/>
            <person name="Shiratori A."/>
            <person name="Sudo H."/>
            <person name="Hosoiri T."/>
            <person name="Kaku Y."/>
            <person name="Kodaira H."/>
            <person name="Kondo H."/>
            <person name="Sugawara M."/>
            <person name="Takahashi M."/>
            <person name="Kanda K."/>
            <person name="Yokoi T."/>
            <person name="Furuya T."/>
            <person name="Kikkawa E."/>
            <person name="Omura Y."/>
            <person name="Abe K."/>
            <person name="Kamihara K."/>
            <person name="Katsuta N."/>
            <person name="Sato K."/>
            <person name="Tanikawa M."/>
            <person name="Yamazaki M."/>
            <person name="Ninomiya K."/>
            <person name="Ishibashi T."/>
            <person name="Yamashita H."/>
            <person name="Murakawa K."/>
            <person name="Fujimori K."/>
            <person name="Tanai H."/>
            <person name="Kimata M."/>
            <person name="Watanabe M."/>
            <person name="Hiraoka S."/>
            <person name="Chiba Y."/>
            <person name="Ishida S."/>
            <person name="Ono Y."/>
            <person name="Takiguchi S."/>
            <person name="Watanabe S."/>
            <person name="Yosida M."/>
            <person name="Hotuta T."/>
            <person name="Kusano J."/>
            <person name="Kanehori K."/>
            <person name="Takahashi-Fujii A."/>
            <person name="Hara H."/>
            <person name="Tanase T.-O."/>
            <person name="Nomura Y."/>
            <person name="Togiya S."/>
            <person name="Komai F."/>
            <person name="Hara R."/>
            <person name="Takeuchi K."/>
            <person name="Arita M."/>
            <person name="Imose N."/>
            <person name="Musashino K."/>
            <person name="Yuuki H."/>
            <person name="Oshima A."/>
            <person name="Sasaki N."/>
            <person name="Aotsuka S."/>
            <person name="Yoshikawa Y."/>
            <person name="Matsunawa H."/>
            <person name="Ichihara T."/>
            <person name="Shiohata N."/>
            <person name="Sano S."/>
            <person name="Moriya S."/>
            <person name="Momiyama H."/>
            <person name="Satoh N."/>
            <person name="Takami S."/>
            <person name="Terashima Y."/>
            <person name="Suzuki O."/>
            <person name="Nakagawa S."/>
            <person name="Senoh A."/>
            <person name="Mizoguchi H."/>
            <person name="Goto Y."/>
            <person name="Shimizu F."/>
            <person name="Wakebe H."/>
            <person name="Hishigaki H."/>
            <person name="Watanabe T."/>
            <person name="Sugiyama A."/>
            <person name="Takemoto M."/>
            <person name="Kawakami B."/>
            <person name="Yamazaki M."/>
            <person name="Watanabe K."/>
            <person name="Kumagai A."/>
            <person name="Itakura S."/>
            <person name="Fukuzumi Y."/>
            <person name="Fujimori Y."/>
            <person name="Komiyama M."/>
            <person name="Tashiro H."/>
            <person name="Tanigami A."/>
            <person name="Fujiwara T."/>
            <person name="Ono T."/>
            <person name="Yamada K."/>
            <person name="Fujii Y."/>
            <person name="Ozaki K."/>
            <person name="Hirao M."/>
            <person name="Ohmori Y."/>
            <person name="Kawabata A."/>
            <person name="Hikiji T."/>
            <person name="Kobatake N."/>
            <person name="Inagaki H."/>
            <person name="Ikema Y."/>
            <person name="Okamoto S."/>
            <person name="Okitani R."/>
            <person name="Kawakami T."/>
            <person name="Noguchi S."/>
            <person name="Itoh T."/>
            <person name="Shigeta K."/>
            <person name="Senba T."/>
            <person name="Matsumura K."/>
            <person name="Nakajima Y."/>
            <person name="Mizuno T."/>
            <person name="Morinaga M."/>
            <person name="Sasaki M."/>
            <person name="Togashi T."/>
            <person name="Oyama M."/>
            <person name="Hata H."/>
            <person name="Watanabe M."/>
            <person name="Komatsu T."/>
            <person name="Mizushima-Sugano J."/>
            <person name="Satoh T."/>
            <person name="Shirai Y."/>
            <person name="Takahashi Y."/>
            <person name="Nakagawa K."/>
            <person name="Okumura K."/>
            <person name="Nagase T."/>
            <person name="Nomura N."/>
            <person name="Kikuchi H."/>
            <person name="Masuho Y."/>
            <person name="Yamashita R."/>
            <person name="Nakai K."/>
            <person name="Yada T."/>
            <person name="Nakamura Y."/>
            <person name="Ohara O."/>
            <person name="Isogai T."/>
            <person name="Sugano S."/>
        </authorList>
    </citation>
    <scope>NUCLEOTIDE SEQUENCE [LARGE SCALE MRNA] (ISOFORMS 1 AND 2)</scope>
</reference>
<reference key="4">
    <citation type="journal article" date="2004" name="Genome Res.">
        <title>The status, quality, and expansion of the NIH full-length cDNA project: the Mammalian Gene Collection (MGC).</title>
        <authorList>
            <consortium name="The MGC Project Team"/>
        </authorList>
    </citation>
    <scope>NUCLEOTIDE SEQUENCE [LARGE SCALE MRNA] (ISOFORM 1)</scope>
    <source>
        <tissue>Pancreas</tissue>
    </source>
</reference>
<reference key="5">
    <citation type="journal article" date="2013" name="PLoS ONE">
        <title>Reinvestigation of aminoacyl-tRNA synthetase core complex by affinity purification-mass spectrometry reveals TARSL2 as a potential member of the complex.</title>
        <authorList>
            <person name="Kim K."/>
            <person name="Park S.J."/>
            <person name="Na S."/>
            <person name="Kim J.S."/>
            <person name="Choi H."/>
            <person name="Kim Y.K."/>
            <person name="Paek E."/>
            <person name="Lee C."/>
        </authorList>
    </citation>
    <scope>PROTEIN SEQUENCE OF 1-9</scope>
    <scope>ALTERNATIVE SPLICING</scope>
    <scope>IDENTIFICATION IN THE MSC COMPLEX</scope>
    <scope>INTERACTION WITH TARS3</scope>
    <scope>CLEAVAGE OF INITIATOR METHIONINE</scope>
    <scope>ACETYLATION AT ALA-2</scope>
    <scope>IDENTIFICATION BY MASS SPECTROMETRY (ISOFORMS 1 AND 2)</scope>
</reference>
<reference key="6">
    <citation type="journal article" date="1999" name="J. Biol. Chem.">
        <title>Precursor of pro-apoptotic cytokine modulates aminoacylation activity of tRNA synthetase.</title>
        <authorList>
            <person name="Park S.G."/>
            <person name="Jung K.H."/>
            <person name="Lee J.S."/>
            <person name="Jo Y.J."/>
            <person name="Motegi H."/>
            <person name="Kim S."/>
            <person name="Shiba K."/>
        </authorList>
    </citation>
    <scope>FUNCTION</scope>
    <scope>INTERACTION WITH RARS1</scope>
</reference>
<reference key="7">
    <citation type="journal article" date="2000" name="Cancer Res.">
        <title>Prostate adenocarcinoma cells release the novel proinflammatory polypeptide EMAP-II in response to stress.</title>
        <authorList>
            <person name="Barnett G."/>
            <person name="Jakobsen A.-M."/>
            <person name="Tas M."/>
            <person name="Rice K."/>
            <person name="Carmichael J."/>
            <person name="Murray J.C."/>
        </authorList>
    </citation>
    <scope>SUBCELLULAR LOCATION</scope>
    <scope>CLEAVAGE</scope>
</reference>
<reference key="8">
    <citation type="journal article" date="2001" name="J. Biol. Chem.">
        <title>The EMAPII cytokine is released from the mammalian multisynthetase complex after cleavage of its p43/proEMAPII component.</title>
        <authorList>
            <person name="Shalak V."/>
            <person name="Kaminska M."/>
            <person name="Mitnacht-Kraus R."/>
            <person name="Vandenabeele P."/>
            <person name="Clauss M."/>
            <person name="Mirande M."/>
        </authorList>
    </citation>
    <scope>FUNCTION</scope>
    <scope>SUBUNIT</scope>
    <scope>CLEAVAGE</scope>
</reference>
<reference key="9">
    <citation type="journal article" date="2002" name="J. Biol. Chem.">
        <title>Dose-dependent biphasic activity of tRNA synthetase-associating factor, p43, in angiogenesis.</title>
        <authorList>
            <person name="Park S.G."/>
            <person name="Kang Y.-S."/>
            <person name="Ahn Y.H."/>
            <person name="Lee S.H."/>
            <person name="Kim K.-R."/>
            <person name="Kim K.-W."/>
            <person name="Koh G.Y."/>
            <person name="Ko Y.-G."/>
            <person name="Kim S."/>
        </authorList>
    </citation>
    <scope>FUNCTION</scope>
</reference>
<reference key="10">
    <citation type="journal article" date="2002" name="J. Leukoc. Biol.">
        <title>Monocyte cell adhesion induced by a human aminoacyl-tRNA synthetase-associated factor, p43: identification of the related adhesion molecules and signal pathways.</title>
        <authorList>
            <person name="Park H."/>
            <person name="Park S.G."/>
            <person name="Lee J.-W."/>
            <person name="Kim T."/>
            <person name="Kim G."/>
            <person name="Ko Y.-G."/>
            <person name="Kim S."/>
        </authorList>
    </citation>
    <scope>FUNCTION</scope>
</reference>
<reference key="11">
    <citation type="journal article" date="2003" name="Protein Sci.">
        <title>Isolation and characterization of human nuclear and cytosolic multisynthetase complexes and the intracellular distribution of p43/EMAPII.</title>
        <authorList>
            <person name="Wolfe C.L."/>
            <person name="Warrington J.A."/>
            <person name="Davis S."/>
            <person name="Green S."/>
            <person name="Norcum M.T."/>
        </authorList>
    </citation>
    <scope>SUBCELLULAR LOCATION</scope>
</reference>
<reference key="12">
    <citation type="journal article" date="2006" name="Biochem. Biophys. Res. Commun.">
        <title>Structural separation of different extracellular activities in aminoacyl-tRNA synthetase-interacting multi-functional protein, p43/AIMP1.</title>
        <authorList>
            <person name="Han J.M."/>
            <person name="Park S.G."/>
            <person name="Lee Y."/>
            <person name="Kim S."/>
        </authorList>
    </citation>
    <scope>REGIONS INVOLVED IN FIBROBLAST PROLIFERATION; ENDOTHELIAL CELL DEATH AND ENDOTHELIAL MIGRATION</scope>
</reference>
<reference key="13">
    <citation type="journal article" date="2007" name="J. Cell. Physiol.">
        <title>Proteasomes and RARS modulate AIMP1/EMAP II secretion in human cancer cell lines.</title>
        <authorList>
            <person name="Bottoni A."/>
            <person name="Vignali C."/>
            <person name="Piccin D."/>
            <person name="Tagliati F."/>
            <person name="Luchin A."/>
            <person name="Zatelli M.C."/>
            <person name="Uberti E.C."/>
        </authorList>
    </citation>
    <scope>INTERACTION WITH RARS1</scope>
</reference>
<reference key="14">
    <citation type="journal article" date="2009" name="Exp. Cell Res.">
        <title>Endothelial monocyte activating polypeptide-II modulates endothelial cell responses by degrading hypoxia-inducible factor-1alpha through interaction with PSMA7, a component of the proteasome.</title>
        <authorList>
            <person name="Tandle A.T."/>
            <person name="Calvani M."/>
            <person name="Uranchimeg B."/>
            <person name="Zahavi D."/>
            <person name="Melillo G."/>
            <person name="Libutti S.K."/>
        </authorList>
    </citation>
    <scope>FUNCTION</scope>
    <scope>INTERACTION WITH PSMA7</scope>
</reference>
<reference key="15">
    <citation type="journal article" date="2009" name="J. Biol. Chem.">
        <title>Dissection of the structural organization of the aminoacyl-tRNA synthetase complex.</title>
        <authorList>
            <person name="Kaminska M."/>
            <person name="Havrylenko S."/>
            <person name="Decottignies P."/>
            <person name="Gillet S."/>
            <person name="Le Marechal P."/>
            <person name="Negrutskii B."/>
            <person name="Mirande M."/>
        </authorList>
    </citation>
    <scope>SUBUNIT</scope>
    <scope>IDENTIFICATION BY MASS SPECTROMETRY</scope>
</reference>
<reference key="16">
    <citation type="journal article" date="2009" name="J. Biol. Chem.">
        <title>Dynamic Organization of Aminoacyl-tRNA Synthetase Complexes in the Cytoplasm of Human Cells.</title>
        <authorList>
            <person name="Kaminska M."/>
            <person name="Havrylenko S."/>
            <person name="Decottignies P."/>
            <person name="Le Marechal P."/>
            <person name="Negrutskii B."/>
            <person name="Mirande M."/>
        </authorList>
    </citation>
    <scope>SUBCELLULAR LOCATION</scope>
    <scope>SUBUNIT</scope>
</reference>
<reference key="17">
    <citation type="journal article" date="2010" name="Am. J. Hum. Genet.">
        <title>Pelizaeus-Merzbacher-like disease caused by AIMP1/p43 homozygous mutation.</title>
        <authorList>
            <person name="Feinstein M."/>
            <person name="Markus B."/>
            <person name="Noyman I."/>
            <person name="Shalev H."/>
            <person name="Flusser H."/>
            <person name="Shelef I."/>
            <person name="Liani-Leibson K."/>
            <person name="Shorer Z."/>
            <person name="Cohen I."/>
            <person name="Khateeb S."/>
            <person name="Sivan S."/>
            <person name="Birk O.S."/>
        </authorList>
    </citation>
    <scope>INVOLVEMENT IN HLD3</scope>
</reference>
<reference key="18">
    <citation type="journal article" date="2010" name="Sci. Signal.">
        <title>Quantitative phosphoproteomics reveals widespread full phosphorylation site occupancy during mitosis.</title>
        <authorList>
            <person name="Olsen J.V."/>
            <person name="Vermeulen M."/>
            <person name="Santamaria A."/>
            <person name="Kumar C."/>
            <person name="Miller M.L."/>
            <person name="Jensen L.J."/>
            <person name="Gnad F."/>
            <person name="Cox J."/>
            <person name="Jensen T.S."/>
            <person name="Nigg E.A."/>
            <person name="Brunak S."/>
            <person name="Mann M."/>
        </authorList>
    </citation>
    <scope>IDENTIFICATION BY MASS SPECTROMETRY [LARGE SCALE ANALYSIS]</scope>
    <source>
        <tissue>Cervix carcinoma</tissue>
    </source>
</reference>
<reference key="19">
    <citation type="journal article" date="2011" name="BMC Syst. Biol.">
        <title>Initial characterization of the human central proteome.</title>
        <authorList>
            <person name="Burkard T.R."/>
            <person name="Planyavsky M."/>
            <person name="Kaupe I."/>
            <person name="Breitwieser F.P."/>
            <person name="Buerckstuemmer T."/>
            <person name="Bennett K.L."/>
            <person name="Superti-Furga G."/>
            <person name="Colinge J."/>
        </authorList>
    </citation>
    <scope>IDENTIFICATION BY MASS SPECTROMETRY [LARGE SCALE ANALYSIS]</scope>
</reference>
<reference key="20">
    <citation type="journal article" date="2012" name="Mol. Cell. Proteomics">
        <title>Comparative large-scale characterisation of plant vs. mammal proteins reveals similar and idiosyncratic N-alpha acetylation features.</title>
        <authorList>
            <person name="Bienvenut W.V."/>
            <person name="Sumpton D."/>
            <person name="Martinez A."/>
            <person name="Lilla S."/>
            <person name="Espagne C."/>
            <person name="Meinnel T."/>
            <person name="Giglione C."/>
        </authorList>
    </citation>
    <scope>ACETYLATION [LARGE SCALE ANALYSIS] AT ALA-2</scope>
    <scope>CLEAVAGE OF INITIATOR METHIONINE [LARGE SCALE ANALYSIS]</scope>
    <scope>IDENTIFICATION BY MASS SPECTROMETRY [LARGE SCALE ANALYSIS]</scope>
</reference>
<reference key="21">
    <citation type="journal article" date="2012" name="Proc. Natl. Acad. Sci. U.S.A.">
        <title>N-terminal acetylome analyses and functional insights of the N-terminal acetyltransferase NatB.</title>
        <authorList>
            <person name="Van Damme P."/>
            <person name="Lasa M."/>
            <person name="Polevoda B."/>
            <person name="Gazquez C."/>
            <person name="Elosegui-Artola A."/>
            <person name="Kim D.S."/>
            <person name="De Juan-Pardo E."/>
            <person name="Demeyer K."/>
            <person name="Hole K."/>
            <person name="Larrea E."/>
            <person name="Timmerman E."/>
            <person name="Prieto J."/>
            <person name="Arnesen T."/>
            <person name="Sherman F."/>
            <person name="Gevaert K."/>
            <person name="Aldabe R."/>
        </authorList>
    </citation>
    <scope>ACETYLATION [LARGE SCALE ANALYSIS] AT ALA-2</scope>
    <scope>CLEAVAGE OF INITIATOR METHIONINE [LARGE SCALE ANALYSIS]</scope>
    <scope>IDENTIFICATION BY MASS SPECTROMETRY [LARGE SCALE ANALYSIS]</scope>
</reference>
<reference key="22">
    <citation type="journal article" date="2013" name="J. Proteome Res.">
        <title>Toward a comprehensive characterization of a human cancer cell phosphoproteome.</title>
        <authorList>
            <person name="Zhou H."/>
            <person name="Di Palma S."/>
            <person name="Preisinger C."/>
            <person name="Peng M."/>
            <person name="Polat A.N."/>
            <person name="Heck A.J."/>
            <person name="Mohammed S."/>
        </authorList>
    </citation>
    <scope>PHOSPHORYLATION [LARGE SCALE ANALYSIS] AT SER-140</scope>
    <scope>IDENTIFICATION BY MASS SPECTROMETRY [LARGE SCALE ANALYSIS]</scope>
    <source>
        <tissue>Cervix carcinoma</tissue>
        <tissue>Erythroleukemia</tissue>
    </source>
</reference>
<reference key="23">
    <citation type="journal article" date="2014" name="J. Proteomics">
        <title>An enzyme assisted RP-RPLC approach for in-depth analysis of human liver phosphoproteome.</title>
        <authorList>
            <person name="Bian Y."/>
            <person name="Song C."/>
            <person name="Cheng K."/>
            <person name="Dong M."/>
            <person name="Wang F."/>
            <person name="Huang J."/>
            <person name="Sun D."/>
            <person name="Wang L."/>
            <person name="Ye M."/>
            <person name="Zou H."/>
        </authorList>
    </citation>
    <scope>IDENTIFICATION BY MASS SPECTROMETRY [LARGE SCALE ANALYSIS]</scope>
    <source>
        <tissue>Liver</tissue>
    </source>
</reference>
<reference key="24">
    <citation type="journal article" date="2014" name="Proc. Natl. Acad. Sci. U.S.A.">
        <title>Mapping of SUMO sites and analysis of SUMOylation changes induced by external stimuli.</title>
        <authorList>
            <person name="Impens F."/>
            <person name="Radoshevich L."/>
            <person name="Cossart P."/>
            <person name="Ribet D."/>
        </authorList>
    </citation>
    <scope>SUMOYLATION [LARGE SCALE ANALYSIS] AT LYS-137</scope>
    <scope>IDENTIFICATION BY MASS SPECTROMETRY [LARGE SCALE ANALYSIS]</scope>
</reference>
<reference key="25">
    <citation type="journal article" date="2015" name="Proteomics">
        <title>N-terminome analysis of the human mitochondrial proteome.</title>
        <authorList>
            <person name="Vaca Jacome A.S."/>
            <person name="Rabilloud T."/>
            <person name="Schaeffer-Reiss C."/>
            <person name="Rompais M."/>
            <person name="Ayoub D."/>
            <person name="Lane L."/>
            <person name="Bairoch A."/>
            <person name="Van Dorsselaer A."/>
            <person name="Carapito C."/>
        </authorList>
    </citation>
    <scope>IDENTIFICATION BY MASS SPECTROMETRY [LARGE SCALE ANALYSIS]</scope>
</reference>
<reference key="26">
    <citation type="journal article" date="2023" name="Life. Sci Alliance">
        <title>N-terminal proteoforms may engage in different protein complexes.</title>
        <authorList>
            <person name="Bogaert A."/>
            <person name="Fijalkowska D."/>
            <person name="Staes A."/>
            <person name="Van de Steene T."/>
            <person name="Vuylsteke M."/>
            <person name="Stadler C."/>
            <person name="Eyckerman S."/>
            <person name="Spirohn K."/>
            <person name="Hao T."/>
            <person name="Calderwood M.A."/>
            <person name="Gevaert K."/>
        </authorList>
    </citation>
    <scope>CLEAVAGE OF INITIATOR METHIONINE (ISOFORM 1)</scope>
    <scope>ACETYLATION AT ALA-2 (ISOFORM 1)</scope>
    <scope>ACETYLATION AT MET-1 (ISOFORM 2)</scope>
</reference>
<reference key="27">
    <citation type="journal article" date="2000" name="J. Biol. Chem.">
        <title>A novel anti-tumor cytokine contains an RNA binding motif present in aminoacyl-tRNA synthetases.</title>
        <authorList>
            <person name="Kim Y."/>
            <person name="Shin J."/>
            <person name="Li R."/>
            <person name="Cheong C."/>
            <person name="Kim K."/>
            <person name="Kim S."/>
        </authorList>
    </citation>
    <scope>X-RAY CRYSTALLOGRAPHY (1.8 ANGSTROMS) OF 147-312</scope>
</reference>
<reference key="28">
    <citation type="journal article" date="2001" name="EMBO J.">
        <title>Structure of the EMAPII domain of human aminoacyl-tRNA synthetase complex reveals evolutionary dimer mimicry.</title>
        <authorList>
            <person name="Renault L."/>
            <person name="Kerjan P."/>
            <person name="Pasqualato S."/>
            <person name="Menetrey J."/>
            <person name="Robinson J.-C."/>
            <person name="Kawaguchi S."/>
            <person name="Vassylyev D.G."/>
            <person name="Yokoyama S."/>
            <person name="Mirande M."/>
            <person name="Cherfils J."/>
        </authorList>
    </citation>
    <scope>X-RAY CRYSTALLOGRAPHY (1.5 ANGSTROMS) OF 148-312</scope>
    <scope>FUNCTION</scope>
</reference>
<reference evidence="24" key="29">
    <citation type="journal article" date="2014" name="Proc. Natl. Acad. Sci. U.S.A.">
        <title>Structure of the ArgRS-GlnRS-AIMP1 complex and its implications for mammalian translation.</title>
        <authorList>
            <person name="Fu Y."/>
            <person name="Kim Y."/>
            <person name="Jin K.S."/>
            <person name="Kim H.S."/>
            <person name="Kim J.H."/>
            <person name="Wang D."/>
            <person name="Park M."/>
            <person name="Jo C.H."/>
            <person name="Kwon N.H."/>
            <person name="Kim D."/>
            <person name="Kim M.H."/>
            <person name="Jeon Y.H."/>
            <person name="Hwang K.Y."/>
            <person name="Kim S."/>
            <person name="Cho Y."/>
        </authorList>
    </citation>
    <scope>X-RAY CRYSTALLOGRAPHY (4.03 ANGSTROMS) IN COMPLEX WITH QARS1 AND RARS1</scope>
</reference>
<proteinExistence type="evidence at protein level"/>
<protein>
    <recommendedName>
        <fullName>Aminoacyl tRNA synthase complex-interacting multifunctional protein 1</fullName>
    </recommendedName>
    <alternativeName>
        <fullName>Multisynthase complex auxiliary component p43</fullName>
    </alternativeName>
    <component>
        <recommendedName>
            <fullName>Endothelial monocyte-activating polypeptide 2</fullName>
            <shortName>EMAP-2</shortName>
        </recommendedName>
        <alternativeName>
            <fullName>Endothelial monocyte-activating polypeptide II</fullName>
            <shortName>EMAP-II</shortName>
        </alternativeName>
        <alternativeName>
            <fullName>Small inducible cytokine subfamily E member 1</fullName>
        </alternativeName>
    </component>
</protein>
<sequence>MANNDAVLKRLEQKGAEADQIIEYLKQQVSLLKEKAILQATLREEKKLRVENAKLKKEIEELKQELIQAEIQNGVKQIPFPSGTPLHANSMVSENVIQSTAVTTVSSGTKEQIKGGTGDEKKAKEKIEKKGEKKEKKQQSIAGSADSKPIDVSRLDLRIGCIITARKHPDADSLYVEEVDVGEIAPRTVVSGLVNHVPLEQMQNRMVILLCNLKPAKMRGVLSQAMVMCASSPEKIEILAPPNGSVPGDRITFDAFPGEPDKELNPKKKIWEQIQPDLHTNDECVATYKGVPFEVKGKGVCRAQTMSNSGIK</sequence>
<name>AIMP1_HUMAN</name>